<accession>A0A1S3Z5Y0</accession>
<accession>O04362</accession>
<proteinExistence type="evidence at protein level"/>
<dbReference type="EC" id="2.7.12.2" evidence="7"/>
<dbReference type="EMBL" id="U94192">
    <property type="protein sequence ID" value="AAB58396.1"/>
    <property type="molecule type" value="mRNA"/>
</dbReference>
<dbReference type="RefSeq" id="NP_001312060.1">
    <property type="nucleotide sequence ID" value="NM_001325131.1"/>
</dbReference>
<dbReference type="RefSeq" id="NP_001412761.1">
    <property type="nucleotide sequence ID" value="NM_001425832.1"/>
</dbReference>
<dbReference type="RefSeq" id="XP_016459880.1">
    <property type="nucleotide sequence ID" value="XM_016604394.1"/>
</dbReference>
<dbReference type="SMR" id="A0A1S3Z5Y0"/>
<dbReference type="STRING" id="4097.A0A1S3Z5Y0"/>
<dbReference type="PaxDb" id="4097-O04362"/>
<dbReference type="GeneID" id="107772177"/>
<dbReference type="GeneID" id="107783427"/>
<dbReference type="KEGG" id="nta:107772177"/>
<dbReference type="KEGG" id="nta:107783427"/>
<dbReference type="OMA" id="EHFNGHK"/>
<dbReference type="OrthoDB" id="192887at2759"/>
<dbReference type="BRENDA" id="2.7.11.24">
    <property type="organism ID" value="3645"/>
</dbReference>
<dbReference type="Proteomes" id="UP000084051">
    <property type="component" value="Unplaced"/>
</dbReference>
<dbReference type="GO" id="GO:0005737">
    <property type="term" value="C:cytoplasm"/>
    <property type="evidence" value="ECO:0000318"/>
    <property type="project" value="GO_Central"/>
</dbReference>
<dbReference type="GO" id="GO:0005634">
    <property type="term" value="C:nucleus"/>
    <property type="evidence" value="ECO:0000318"/>
    <property type="project" value="GO_Central"/>
</dbReference>
<dbReference type="GO" id="GO:0005524">
    <property type="term" value="F:ATP binding"/>
    <property type="evidence" value="ECO:0007669"/>
    <property type="project" value="UniProtKB-KW"/>
</dbReference>
<dbReference type="GO" id="GO:0004707">
    <property type="term" value="F:MAP kinase activity"/>
    <property type="evidence" value="ECO:0007669"/>
    <property type="project" value="UniProtKB-EC"/>
</dbReference>
<dbReference type="GO" id="GO:0106310">
    <property type="term" value="F:protein serine kinase activity"/>
    <property type="evidence" value="ECO:0007669"/>
    <property type="project" value="RHEA"/>
</dbReference>
<dbReference type="GO" id="GO:0004674">
    <property type="term" value="F:protein serine/threonine kinase activity"/>
    <property type="evidence" value="ECO:0000318"/>
    <property type="project" value="GO_Central"/>
</dbReference>
<dbReference type="GO" id="GO:0004713">
    <property type="term" value="F:protein tyrosine kinase activity"/>
    <property type="evidence" value="ECO:0007669"/>
    <property type="project" value="RHEA"/>
</dbReference>
<dbReference type="GO" id="GO:0006952">
    <property type="term" value="P:defense response"/>
    <property type="evidence" value="ECO:0007669"/>
    <property type="project" value="UniProtKB-KW"/>
</dbReference>
<dbReference type="GO" id="GO:0035556">
    <property type="term" value="P:intracellular signal transduction"/>
    <property type="evidence" value="ECO:0000318"/>
    <property type="project" value="GO_Central"/>
</dbReference>
<dbReference type="CDD" id="cd07858">
    <property type="entry name" value="STKc_TEY_MAPK"/>
    <property type="match status" value="1"/>
</dbReference>
<dbReference type="FunFam" id="1.10.510.10:FF:000013">
    <property type="entry name" value="Mitogen-activated protein kinase"/>
    <property type="match status" value="1"/>
</dbReference>
<dbReference type="FunFam" id="3.30.200.20:FF:000046">
    <property type="entry name" value="Mitogen-activated protein kinase"/>
    <property type="match status" value="1"/>
</dbReference>
<dbReference type="Gene3D" id="3.30.200.20">
    <property type="entry name" value="Phosphorylase Kinase, domain 1"/>
    <property type="match status" value="1"/>
</dbReference>
<dbReference type="Gene3D" id="1.10.510.10">
    <property type="entry name" value="Transferase(Phosphotransferase) domain 1"/>
    <property type="match status" value="1"/>
</dbReference>
<dbReference type="InterPro" id="IPR011009">
    <property type="entry name" value="Kinase-like_dom_sf"/>
</dbReference>
<dbReference type="InterPro" id="IPR050117">
    <property type="entry name" value="MAP_kinase"/>
</dbReference>
<dbReference type="InterPro" id="IPR003527">
    <property type="entry name" value="MAP_kinase_CS"/>
</dbReference>
<dbReference type="InterPro" id="IPR000719">
    <property type="entry name" value="Prot_kinase_dom"/>
</dbReference>
<dbReference type="InterPro" id="IPR017441">
    <property type="entry name" value="Protein_kinase_ATP_BS"/>
</dbReference>
<dbReference type="InterPro" id="IPR008271">
    <property type="entry name" value="Ser/Thr_kinase_AS"/>
</dbReference>
<dbReference type="PANTHER" id="PTHR24055">
    <property type="entry name" value="MITOGEN-ACTIVATED PROTEIN KINASE"/>
    <property type="match status" value="1"/>
</dbReference>
<dbReference type="Pfam" id="PF00069">
    <property type="entry name" value="Pkinase"/>
    <property type="match status" value="1"/>
</dbReference>
<dbReference type="SMART" id="SM00220">
    <property type="entry name" value="S_TKc"/>
    <property type="match status" value="1"/>
</dbReference>
<dbReference type="SUPFAM" id="SSF56112">
    <property type="entry name" value="Protein kinase-like (PK-like)"/>
    <property type="match status" value="1"/>
</dbReference>
<dbReference type="PROSITE" id="PS01351">
    <property type="entry name" value="MAPK"/>
    <property type="match status" value="1"/>
</dbReference>
<dbReference type="PROSITE" id="PS00107">
    <property type="entry name" value="PROTEIN_KINASE_ATP"/>
    <property type="match status" value="1"/>
</dbReference>
<dbReference type="PROSITE" id="PS50011">
    <property type="entry name" value="PROTEIN_KINASE_DOM"/>
    <property type="match status" value="1"/>
</dbReference>
<dbReference type="PROSITE" id="PS00108">
    <property type="entry name" value="PROTEIN_KINASE_ST"/>
    <property type="match status" value="1"/>
</dbReference>
<feature type="chain" id="PRO_0000458766" description="Mitogen-activated protein kinase SIPK">
    <location>
        <begin position="1"/>
        <end position="393"/>
    </location>
</feature>
<feature type="domain" description="Protein kinase" evidence="1">
    <location>
        <begin position="60"/>
        <end position="345"/>
    </location>
</feature>
<feature type="region of interest" description="Disordered" evidence="2">
    <location>
        <begin position="1"/>
        <end position="31"/>
    </location>
</feature>
<feature type="short sequence motif" description="TXY" evidence="6">
    <location>
        <begin position="218"/>
        <end position="220"/>
    </location>
</feature>
<feature type="compositionally biased region" description="Polar residues" evidence="2">
    <location>
        <begin position="1"/>
        <end position="11"/>
    </location>
</feature>
<feature type="active site" description="Proton acceptor" evidence="1">
    <location>
        <position position="186"/>
    </location>
</feature>
<feature type="binding site" evidence="1">
    <location>
        <begin position="66"/>
        <end position="74"/>
    </location>
    <ligand>
        <name>ATP</name>
        <dbReference type="ChEBI" id="CHEBI:30616"/>
    </ligand>
</feature>
<feature type="binding site" evidence="1">
    <location>
        <position position="89"/>
    </location>
    <ligand>
        <name>ATP</name>
        <dbReference type="ChEBI" id="CHEBI:30616"/>
    </ligand>
</feature>
<feature type="sequence conflict" description="In Ref. 1; AAB58396." evidence="6" ref="1">
    <original>P</original>
    <variation>T</variation>
    <location>
        <position position="22"/>
    </location>
</feature>
<feature type="sequence conflict" description="In Ref. 1; AAB58396." evidence="6" ref="1">
    <original>Y</original>
    <variation>H</variation>
    <location>
        <position position="39"/>
    </location>
</feature>
<feature type="sequence conflict" description="In Ref. 1; AAB58396." evidence="6" ref="1">
    <original>I</original>
    <variation>V</variation>
    <location>
        <position position="244"/>
    </location>
</feature>
<feature type="sequence conflict" description="In Ref. 1; AAB58396." evidence="6" ref="1">
    <original>T</original>
    <variation>M</variation>
    <location>
        <position position="252"/>
    </location>
</feature>
<feature type="sequence conflict" description="In Ref. 1; AAB58396." evidence="6" ref="1">
    <original>A</original>
    <variation>T</variation>
    <location>
        <position position="317"/>
    </location>
</feature>
<organism>
    <name type="scientific">Nicotiana tabacum</name>
    <name type="common">Common tobacco</name>
    <dbReference type="NCBI Taxonomy" id="4097"/>
    <lineage>
        <taxon>Eukaryota</taxon>
        <taxon>Viridiplantae</taxon>
        <taxon>Streptophyta</taxon>
        <taxon>Embryophyta</taxon>
        <taxon>Tracheophyta</taxon>
        <taxon>Spermatophyta</taxon>
        <taxon>Magnoliopsida</taxon>
        <taxon>eudicotyledons</taxon>
        <taxon>Gunneridae</taxon>
        <taxon>Pentapetalae</taxon>
        <taxon>asterids</taxon>
        <taxon>lamiids</taxon>
        <taxon>Solanales</taxon>
        <taxon>Solanaceae</taxon>
        <taxon>Nicotianoideae</taxon>
        <taxon>Nicotianeae</taxon>
        <taxon>Nicotiana</taxon>
    </lineage>
</organism>
<reference key="1">
    <citation type="journal article" date="1997" name="Plant Cell">
        <title>Salicylic acid activates a 48-kD MAP kinase in tobacco.</title>
        <authorList>
            <person name="Zhang S."/>
            <person name="Klessig D.F."/>
        </authorList>
    </citation>
    <scope>NUCLEOTIDE SEQUENCE [MRNA]</scope>
    <source>
        <strain>cv. Xanthi</strain>
    </source>
</reference>
<reference key="2">
    <citation type="journal article" date="2014" name="Nat. Commun.">
        <title>The tobacco genome sequence and its comparison with those of tomato and potato.</title>
        <authorList>
            <person name="Sierro N."/>
            <person name="Battey J.N."/>
            <person name="Ouadi S."/>
            <person name="Bakaher N."/>
            <person name="Bovet L."/>
            <person name="Willig A."/>
            <person name="Goepfert S."/>
            <person name="Peitsch M.C."/>
            <person name="Ivanov N.V."/>
        </authorList>
    </citation>
    <scope>NUCLEOTIDE SEQUENCE [LARGE SCALE GENOMIC DNA]</scope>
    <source>
        <strain>cv. TN90</strain>
    </source>
</reference>
<reference key="3">
    <citation type="journal article" date="1998" name="Proc. Natl. Acad. Sci. U.S.A.">
        <title>The tobacco wounding-activated mitogen-activated protein kinase is encoded by SIPK.</title>
        <authorList>
            <person name="Zhang S."/>
            <person name="Klessig D.F."/>
        </authorList>
    </citation>
    <scope>FUNCTION</scope>
    <scope>CATALYTIC ACTIVITY</scope>
    <scope>INDUCTION</scope>
</reference>
<reference key="4">
    <citation type="journal article" date="2000" name="Mol. Plant Microbe Interact.">
        <title>Molecular cloning and characterization of a tobacco MAP kinase kinase that interacts with SIPK.</title>
        <authorList>
            <person name="Liu Y."/>
            <person name="Zhang S."/>
            <person name="Klessig D.F."/>
        </authorList>
    </citation>
    <scope>INTERACTION WITH SIPKK</scope>
</reference>
<name>SIPK_TOBAC</name>
<gene>
    <name evidence="5" type="primary">SIPK</name>
    <name type="ORF">LOC107772177</name>
    <name evidence="8" type="ORF">LOC107783427</name>
</gene>
<comment type="function">
    <text evidence="4 7">Phosphorylates myelin basic protein (MBP) in vitro (PubMed:9618567). May be involved in disease resistance (Probable).</text>
</comment>
<comment type="catalytic activity">
    <reaction evidence="7">
        <text>L-tyrosyl-[protein] + ATP = O-phospho-L-tyrosyl-[protein] + ADP + H(+)</text>
        <dbReference type="Rhea" id="RHEA:10596"/>
        <dbReference type="Rhea" id="RHEA-COMP:10136"/>
        <dbReference type="Rhea" id="RHEA-COMP:20101"/>
        <dbReference type="ChEBI" id="CHEBI:15378"/>
        <dbReference type="ChEBI" id="CHEBI:30616"/>
        <dbReference type="ChEBI" id="CHEBI:46858"/>
        <dbReference type="ChEBI" id="CHEBI:61978"/>
        <dbReference type="ChEBI" id="CHEBI:456216"/>
        <dbReference type="EC" id="2.7.12.2"/>
    </reaction>
    <physiologicalReaction direction="left-to-right" evidence="7">
        <dbReference type="Rhea" id="RHEA:10597"/>
    </physiologicalReaction>
</comment>
<comment type="catalytic activity">
    <reaction evidence="7">
        <text>L-seryl-[protein] + ATP = O-phospho-L-seryl-[protein] + ADP + H(+)</text>
        <dbReference type="Rhea" id="RHEA:17989"/>
        <dbReference type="Rhea" id="RHEA-COMP:9863"/>
        <dbReference type="Rhea" id="RHEA-COMP:11604"/>
        <dbReference type="ChEBI" id="CHEBI:15378"/>
        <dbReference type="ChEBI" id="CHEBI:29999"/>
        <dbReference type="ChEBI" id="CHEBI:30616"/>
        <dbReference type="ChEBI" id="CHEBI:83421"/>
        <dbReference type="ChEBI" id="CHEBI:456216"/>
        <dbReference type="EC" id="2.7.12.2"/>
    </reaction>
    <physiologicalReaction direction="left-to-right" evidence="7">
        <dbReference type="Rhea" id="RHEA:17990"/>
    </physiologicalReaction>
</comment>
<comment type="catalytic activity">
    <reaction evidence="7">
        <text>L-threonyl-[protein] + ATP = O-phospho-L-threonyl-[protein] + ADP + H(+)</text>
        <dbReference type="Rhea" id="RHEA:46608"/>
        <dbReference type="Rhea" id="RHEA-COMP:11060"/>
        <dbReference type="Rhea" id="RHEA-COMP:11605"/>
        <dbReference type="ChEBI" id="CHEBI:15378"/>
        <dbReference type="ChEBI" id="CHEBI:30013"/>
        <dbReference type="ChEBI" id="CHEBI:30616"/>
        <dbReference type="ChEBI" id="CHEBI:61977"/>
        <dbReference type="ChEBI" id="CHEBI:456216"/>
        <dbReference type="EC" id="2.7.12.2"/>
    </reaction>
    <physiologicalReaction direction="left-to-right" evidence="7">
        <dbReference type="Rhea" id="RHEA:46609"/>
    </physiologicalReaction>
</comment>
<comment type="activity regulation">
    <text evidence="6">Activated by threonine and tyrosine phosphorylation.</text>
</comment>
<comment type="subunit">
    <text evidence="3">Interacts with SIPKK.</text>
</comment>
<comment type="induction">
    <text evidence="4">Induced by salicylic acid (SA), fungal cell wall elicitor and wounding.</text>
</comment>
<comment type="similarity">
    <text evidence="6">Belongs to the protein kinase superfamily. CMGC Ser/Thr protein kinase family. MAP kinase subfamily.</text>
</comment>
<keyword id="KW-0067">ATP-binding</keyword>
<keyword id="KW-0418">Kinase</keyword>
<keyword id="KW-0547">Nucleotide-binding</keyword>
<keyword id="KW-0611">Plant defense</keyword>
<keyword id="KW-1185">Reference proteome</keyword>
<keyword id="KW-0723">Serine/threonine-protein kinase</keyword>
<keyword id="KW-0808">Transferase</keyword>
<evidence type="ECO:0000255" key="1">
    <source>
        <dbReference type="PROSITE-ProRule" id="PRU00159"/>
    </source>
</evidence>
<evidence type="ECO:0000256" key="2">
    <source>
        <dbReference type="SAM" id="MobiDB-lite"/>
    </source>
</evidence>
<evidence type="ECO:0000269" key="3">
    <source>
    </source>
</evidence>
<evidence type="ECO:0000269" key="4">
    <source>
    </source>
</evidence>
<evidence type="ECO:0000303" key="5">
    <source>
    </source>
</evidence>
<evidence type="ECO:0000305" key="6"/>
<evidence type="ECO:0000305" key="7">
    <source>
    </source>
</evidence>
<evidence type="ECO:0000312" key="8">
    <source>
        <dbReference type="RefSeq" id="XP_016459880.1"/>
    </source>
</evidence>
<protein>
    <recommendedName>
        <fullName evidence="5">Mitogen-activated protein kinase SIPK</fullName>
        <ecNumber evidence="7">2.7.12.2</ecNumber>
    </recommendedName>
    <alternativeName>
        <fullName evidence="5">Salicylic acid-induced protein kinase</fullName>
    </alternativeName>
</protein>
<sequence length="393" mass="45139">MDGSGQQTDTMMSDAGAEQPPPAPQPVAGMDNIPATLSYGGRFIQYNIFGNIFEVTAKYKPPILPIGKGAYGIVCSALNSETIENVAIKKIANAFDNKIDAKRTLREIKLLRHMDHENIVAIRDIIPPPQREAFNDVYIAYELMDTDLHQIIRSNQGLSEEHCQYFLYQILRGLKYIHSANVLHRDLKPSNLLLNANCDLKICDFGLARVTSETDFMTEYVVTRWYRPPELLLNSSDYTAAIDIWSVGCIFTELMDRKPLFPGRDHVHQLRLIMELIGTPSEAEMEFLNENAKRYIRQLPLYRRQSFTEKFPHVHPAAIDLVEKMLTFDPRRRITVEGALAHPYLNSLHDISDEPICMTPFSFDFEQHALTEEQMKELIYRESLAFNPEYQHM</sequence>